<reference key="1">
    <citation type="journal article" date="2009" name="BMC Genomics">
        <title>Pseudogene accumulation in the evolutionary histories of Salmonella enterica serovars Paratyphi A and Typhi.</title>
        <authorList>
            <person name="Holt K.E."/>
            <person name="Thomson N.R."/>
            <person name="Wain J."/>
            <person name="Langridge G.C."/>
            <person name="Hasan R."/>
            <person name="Bhutta Z.A."/>
            <person name="Quail M.A."/>
            <person name="Norbertczak H."/>
            <person name="Walker D."/>
            <person name="Simmonds M."/>
            <person name="White B."/>
            <person name="Bason N."/>
            <person name="Mungall K."/>
            <person name="Dougan G."/>
            <person name="Parkhill J."/>
        </authorList>
    </citation>
    <scope>NUCLEOTIDE SEQUENCE [LARGE SCALE GENOMIC DNA]</scope>
    <source>
        <strain>AKU_12601</strain>
    </source>
</reference>
<sequence length="155" mass="17399">MKLQLVAVGTKMPDWVQTGFTEYLRRFPKDMPFELIEIPAGKRGKNADIKRILDKEGEQMLAAAGKNRIVTLDIPGKPWDTPQLANELERWKQDGRDVSLLIGGPEGLSPACKAAAEQSWSLSALTLPHPLVRVLVAESLYRAWSITTNHPYHRE</sequence>
<organism>
    <name type="scientific">Salmonella paratyphi A (strain AKU_12601)</name>
    <dbReference type="NCBI Taxonomy" id="554290"/>
    <lineage>
        <taxon>Bacteria</taxon>
        <taxon>Pseudomonadati</taxon>
        <taxon>Pseudomonadota</taxon>
        <taxon>Gammaproteobacteria</taxon>
        <taxon>Enterobacterales</taxon>
        <taxon>Enterobacteriaceae</taxon>
        <taxon>Salmonella</taxon>
    </lineage>
</organism>
<feature type="chain" id="PRO_0000366654" description="Ribosomal RNA large subunit methyltransferase H">
    <location>
        <begin position="1"/>
        <end position="155"/>
    </location>
</feature>
<feature type="binding site" evidence="1">
    <location>
        <position position="72"/>
    </location>
    <ligand>
        <name>S-adenosyl-L-methionine</name>
        <dbReference type="ChEBI" id="CHEBI:59789"/>
    </ligand>
</feature>
<feature type="binding site" evidence="1">
    <location>
        <position position="103"/>
    </location>
    <ligand>
        <name>S-adenosyl-L-methionine</name>
        <dbReference type="ChEBI" id="CHEBI:59789"/>
    </ligand>
</feature>
<feature type="binding site" evidence="1">
    <location>
        <begin position="122"/>
        <end position="127"/>
    </location>
    <ligand>
        <name>S-adenosyl-L-methionine</name>
        <dbReference type="ChEBI" id="CHEBI:59789"/>
    </ligand>
</feature>
<keyword id="KW-0963">Cytoplasm</keyword>
<keyword id="KW-0489">Methyltransferase</keyword>
<keyword id="KW-0698">rRNA processing</keyword>
<keyword id="KW-0949">S-adenosyl-L-methionine</keyword>
<keyword id="KW-0808">Transferase</keyword>
<proteinExistence type="inferred from homology"/>
<name>RLMH_SALPK</name>
<evidence type="ECO:0000255" key="1">
    <source>
        <dbReference type="HAMAP-Rule" id="MF_00658"/>
    </source>
</evidence>
<accession>B5BCF3</accession>
<comment type="function">
    <text evidence="1">Specifically methylates the pseudouridine at position 1915 (m3Psi1915) in 23S rRNA.</text>
</comment>
<comment type="catalytic activity">
    <reaction evidence="1">
        <text>pseudouridine(1915) in 23S rRNA + S-adenosyl-L-methionine = N(3)-methylpseudouridine(1915) in 23S rRNA + S-adenosyl-L-homocysteine + H(+)</text>
        <dbReference type="Rhea" id="RHEA:42752"/>
        <dbReference type="Rhea" id="RHEA-COMP:10221"/>
        <dbReference type="Rhea" id="RHEA-COMP:10222"/>
        <dbReference type="ChEBI" id="CHEBI:15378"/>
        <dbReference type="ChEBI" id="CHEBI:57856"/>
        <dbReference type="ChEBI" id="CHEBI:59789"/>
        <dbReference type="ChEBI" id="CHEBI:65314"/>
        <dbReference type="ChEBI" id="CHEBI:74486"/>
        <dbReference type="EC" id="2.1.1.177"/>
    </reaction>
</comment>
<comment type="subunit">
    <text evidence="1">Homodimer.</text>
</comment>
<comment type="subcellular location">
    <subcellularLocation>
        <location evidence="1">Cytoplasm</location>
    </subcellularLocation>
</comment>
<comment type="similarity">
    <text evidence="1">Belongs to the RNA methyltransferase RlmH family.</text>
</comment>
<protein>
    <recommendedName>
        <fullName evidence="1">Ribosomal RNA large subunit methyltransferase H</fullName>
        <ecNumber evidence="1">2.1.1.177</ecNumber>
    </recommendedName>
    <alternativeName>
        <fullName evidence="1">23S rRNA (pseudouridine1915-N3)-methyltransferase</fullName>
    </alternativeName>
    <alternativeName>
        <fullName evidence="1">23S rRNA m3Psi1915 methyltransferase</fullName>
    </alternativeName>
    <alternativeName>
        <fullName evidence="1">rRNA (pseudouridine-N3-)-methyltransferase RlmH</fullName>
    </alternativeName>
</protein>
<dbReference type="EC" id="2.1.1.177" evidence="1"/>
<dbReference type="EMBL" id="FM200053">
    <property type="protein sequence ID" value="CAR60146.1"/>
    <property type="molecule type" value="Genomic_DNA"/>
</dbReference>
<dbReference type="RefSeq" id="WP_000776107.1">
    <property type="nucleotide sequence ID" value="NC_011147.1"/>
</dbReference>
<dbReference type="SMR" id="B5BCF3"/>
<dbReference type="GeneID" id="66755108"/>
<dbReference type="KEGG" id="sek:SSPA1945"/>
<dbReference type="HOGENOM" id="CLU_100552_1_0_6"/>
<dbReference type="Proteomes" id="UP000001869">
    <property type="component" value="Chromosome"/>
</dbReference>
<dbReference type="GO" id="GO:0005737">
    <property type="term" value="C:cytoplasm"/>
    <property type="evidence" value="ECO:0007669"/>
    <property type="project" value="UniProtKB-SubCell"/>
</dbReference>
<dbReference type="GO" id="GO:0070038">
    <property type="term" value="F:rRNA (pseudouridine-N3-)-methyltransferase activity"/>
    <property type="evidence" value="ECO:0007669"/>
    <property type="project" value="UniProtKB-UniRule"/>
</dbReference>
<dbReference type="CDD" id="cd18081">
    <property type="entry name" value="RlmH-like"/>
    <property type="match status" value="1"/>
</dbReference>
<dbReference type="FunFam" id="3.40.1280.10:FF:000004">
    <property type="entry name" value="Ribosomal RNA large subunit methyltransferase H"/>
    <property type="match status" value="1"/>
</dbReference>
<dbReference type="Gene3D" id="3.40.1280.10">
    <property type="match status" value="1"/>
</dbReference>
<dbReference type="HAMAP" id="MF_00658">
    <property type="entry name" value="23SrRNA_methyltr_H"/>
    <property type="match status" value="1"/>
</dbReference>
<dbReference type="InterPro" id="IPR029028">
    <property type="entry name" value="Alpha/beta_knot_MTases"/>
</dbReference>
<dbReference type="InterPro" id="IPR003742">
    <property type="entry name" value="RlmH-like"/>
</dbReference>
<dbReference type="InterPro" id="IPR029026">
    <property type="entry name" value="tRNA_m1G_MTases_N"/>
</dbReference>
<dbReference type="NCBIfam" id="NF000984">
    <property type="entry name" value="PRK00103.1-1"/>
    <property type="match status" value="1"/>
</dbReference>
<dbReference type="NCBIfam" id="NF000986">
    <property type="entry name" value="PRK00103.1-4"/>
    <property type="match status" value="1"/>
</dbReference>
<dbReference type="NCBIfam" id="TIGR00246">
    <property type="entry name" value="tRNA_RlmH_YbeA"/>
    <property type="match status" value="1"/>
</dbReference>
<dbReference type="PANTHER" id="PTHR33603">
    <property type="entry name" value="METHYLTRANSFERASE"/>
    <property type="match status" value="1"/>
</dbReference>
<dbReference type="PANTHER" id="PTHR33603:SF1">
    <property type="entry name" value="RIBOSOMAL RNA LARGE SUBUNIT METHYLTRANSFERASE H"/>
    <property type="match status" value="1"/>
</dbReference>
<dbReference type="Pfam" id="PF02590">
    <property type="entry name" value="SPOUT_MTase"/>
    <property type="match status" value="1"/>
</dbReference>
<dbReference type="PIRSF" id="PIRSF004505">
    <property type="entry name" value="MT_bac"/>
    <property type="match status" value="1"/>
</dbReference>
<dbReference type="SUPFAM" id="SSF75217">
    <property type="entry name" value="alpha/beta knot"/>
    <property type="match status" value="1"/>
</dbReference>
<gene>
    <name evidence="1" type="primary">rlmH</name>
    <name type="ordered locus">SSPA1945</name>
</gene>